<dbReference type="EC" id="2.5.1.7" evidence="1"/>
<dbReference type="EMBL" id="CP000472">
    <property type="protein sequence ID" value="ACJ27508.1"/>
    <property type="molecule type" value="Genomic_DNA"/>
</dbReference>
<dbReference type="RefSeq" id="WP_020910889.1">
    <property type="nucleotide sequence ID" value="NC_011566.1"/>
</dbReference>
<dbReference type="SMR" id="B8CIN2"/>
<dbReference type="STRING" id="225849.swp_0690"/>
<dbReference type="KEGG" id="swp:swp_0690"/>
<dbReference type="eggNOG" id="COG0766">
    <property type="taxonomic scope" value="Bacteria"/>
</dbReference>
<dbReference type="HOGENOM" id="CLU_027387_0_0_6"/>
<dbReference type="OrthoDB" id="9803760at2"/>
<dbReference type="UniPathway" id="UPA00219"/>
<dbReference type="Proteomes" id="UP000000753">
    <property type="component" value="Chromosome"/>
</dbReference>
<dbReference type="GO" id="GO:0005737">
    <property type="term" value="C:cytoplasm"/>
    <property type="evidence" value="ECO:0007669"/>
    <property type="project" value="UniProtKB-SubCell"/>
</dbReference>
<dbReference type="GO" id="GO:0008760">
    <property type="term" value="F:UDP-N-acetylglucosamine 1-carboxyvinyltransferase activity"/>
    <property type="evidence" value="ECO:0007669"/>
    <property type="project" value="UniProtKB-UniRule"/>
</dbReference>
<dbReference type="GO" id="GO:0051301">
    <property type="term" value="P:cell division"/>
    <property type="evidence" value="ECO:0007669"/>
    <property type="project" value="UniProtKB-KW"/>
</dbReference>
<dbReference type="GO" id="GO:0071555">
    <property type="term" value="P:cell wall organization"/>
    <property type="evidence" value="ECO:0007669"/>
    <property type="project" value="UniProtKB-KW"/>
</dbReference>
<dbReference type="GO" id="GO:0009252">
    <property type="term" value="P:peptidoglycan biosynthetic process"/>
    <property type="evidence" value="ECO:0007669"/>
    <property type="project" value="UniProtKB-UniRule"/>
</dbReference>
<dbReference type="GO" id="GO:0008360">
    <property type="term" value="P:regulation of cell shape"/>
    <property type="evidence" value="ECO:0007669"/>
    <property type="project" value="UniProtKB-KW"/>
</dbReference>
<dbReference type="GO" id="GO:0019277">
    <property type="term" value="P:UDP-N-acetylgalactosamine biosynthetic process"/>
    <property type="evidence" value="ECO:0007669"/>
    <property type="project" value="InterPro"/>
</dbReference>
<dbReference type="CDD" id="cd01555">
    <property type="entry name" value="UdpNAET"/>
    <property type="match status" value="1"/>
</dbReference>
<dbReference type="FunFam" id="3.65.10.10:FF:000002">
    <property type="entry name" value="UDP-N-acetylglucosamine 1-carboxyvinyltransferase"/>
    <property type="match status" value="1"/>
</dbReference>
<dbReference type="Gene3D" id="3.65.10.10">
    <property type="entry name" value="Enolpyruvate transferase domain"/>
    <property type="match status" value="2"/>
</dbReference>
<dbReference type="HAMAP" id="MF_00111">
    <property type="entry name" value="MurA"/>
    <property type="match status" value="1"/>
</dbReference>
<dbReference type="InterPro" id="IPR001986">
    <property type="entry name" value="Enolpyruvate_Tfrase_dom"/>
</dbReference>
<dbReference type="InterPro" id="IPR036968">
    <property type="entry name" value="Enolpyruvate_Tfrase_sf"/>
</dbReference>
<dbReference type="InterPro" id="IPR050068">
    <property type="entry name" value="MurA_subfamily"/>
</dbReference>
<dbReference type="InterPro" id="IPR013792">
    <property type="entry name" value="RNA3'P_cycl/enolpyr_Trfase_a/b"/>
</dbReference>
<dbReference type="InterPro" id="IPR005750">
    <property type="entry name" value="UDP_GlcNAc_COvinyl_MurA"/>
</dbReference>
<dbReference type="NCBIfam" id="TIGR01072">
    <property type="entry name" value="murA"/>
    <property type="match status" value="1"/>
</dbReference>
<dbReference type="NCBIfam" id="NF006873">
    <property type="entry name" value="PRK09369.1"/>
    <property type="match status" value="1"/>
</dbReference>
<dbReference type="PANTHER" id="PTHR43783">
    <property type="entry name" value="UDP-N-ACETYLGLUCOSAMINE 1-CARBOXYVINYLTRANSFERASE"/>
    <property type="match status" value="1"/>
</dbReference>
<dbReference type="PANTHER" id="PTHR43783:SF1">
    <property type="entry name" value="UDP-N-ACETYLGLUCOSAMINE 1-CARBOXYVINYLTRANSFERASE"/>
    <property type="match status" value="1"/>
</dbReference>
<dbReference type="Pfam" id="PF00275">
    <property type="entry name" value="EPSP_synthase"/>
    <property type="match status" value="1"/>
</dbReference>
<dbReference type="SUPFAM" id="SSF55205">
    <property type="entry name" value="EPT/RTPC-like"/>
    <property type="match status" value="1"/>
</dbReference>
<keyword id="KW-0131">Cell cycle</keyword>
<keyword id="KW-0132">Cell division</keyword>
<keyword id="KW-0133">Cell shape</keyword>
<keyword id="KW-0961">Cell wall biogenesis/degradation</keyword>
<keyword id="KW-0963">Cytoplasm</keyword>
<keyword id="KW-0573">Peptidoglycan synthesis</keyword>
<keyword id="KW-0670">Pyruvate</keyword>
<keyword id="KW-0808">Transferase</keyword>
<gene>
    <name evidence="1" type="primary">murA</name>
    <name type="ordered locus">swp_0690</name>
</gene>
<protein>
    <recommendedName>
        <fullName evidence="1">UDP-N-acetylglucosamine 1-carboxyvinyltransferase</fullName>
        <ecNumber evidence="1">2.5.1.7</ecNumber>
    </recommendedName>
    <alternativeName>
        <fullName evidence="1">Enoylpyruvate transferase</fullName>
    </alternativeName>
    <alternativeName>
        <fullName evidence="1">UDP-N-acetylglucosamine enolpyruvyl transferase</fullName>
        <shortName evidence="1">EPT</shortName>
    </alternativeName>
</protein>
<reference key="1">
    <citation type="journal article" date="2008" name="PLoS ONE">
        <title>Environmental adaptation: genomic analysis of the piezotolerant and psychrotolerant deep-sea iron reducing bacterium Shewanella piezotolerans WP3.</title>
        <authorList>
            <person name="Wang F."/>
            <person name="Wang J."/>
            <person name="Jian H."/>
            <person name="Zhang B."/>
            <person name="Li S."/>
            <person name="Wang F."/>
            <person name="Zeng X."/>
            <person name="Gao L."/>
            <person name="Bartlett D.H."/>
            <person name="Yu J."/>
            <person name="Hu S."/>
            <person name="Xiao X."/>
        </authorList>
    </citation>
    <scope>NUCLEOTIDE SEQUENCE [LARGE SCALE GENOMIC DNA]</scope>
    <source>
        <strain>WP3 / JCM 13877</strain>
    </source>
</reference>
<evidence type="ECO:0000255" key="1">
    <source>
        <dbReference type="HAMAP-Rule" id="MF_00111"/>
    </source>
</evidence>
<organism>
    <name type="scientific">Shewanella piezotolerans (strain WP3 / JCM 13877)</name>
    <dbReference type="NCBI Taxonomy" id="225849"/>
    <lineage>
        <taxon>Bacteria</taxon>
        <taxon>Pseudomonadati</taxon>
        <taxon>Pseudomonadota</taxon>
        <taxon>Gammaproteobacteria</taxon>
        <taxon>Alteromonadales</taxon>
        <taxon>Shewanellaceae</taxon>
        <taxon>Shewanella</taxon>
    </lineage>
</organism>
<name>MURA_SHEPW</name>
<sequence length="419" mass="44566">MDKLKIEASGALAGDVVISGAKNAALPILMAGVLAETDFNVSNVPSLRDVNTSCELLRCLGAEVTRSGDDKVCISTTNLNEFCAPYELVKTMRASILILGPLLARYGKADVSLPGGCAIGARPVNLHLQGLEQMGAKIEVKEGYIKARVDGRLKGAHIFMDMISVGATENLLMAAALADGETVIENAAREPEVVDLANCLIAMGAKIEGAGTDTVRIQGVESLQGCDYQVMPDRIETGSFLVAAAVTRGKIRCIKADPKSLEAVLAKLEDAGASITTGDDWIELDMQGQRPKAVNIKTVAYPGFPTDMQAQFCVLNALAEGTATITETIFENRFMHVPELSRMGATMELEGNTCIIHGIEKLNGAQVMATDLRASASLVIAGLVADGTTTVDRIYHLDRGYEHIEDKFKGLGGDVKRVK</sequence>
<feature type="chain" id="PRO_1000117512" description="UDP-N-acetylglucosamine 1-carboxyvinyltransferase">
    <location>
        <begin position="1"/>
        <end position="419"/>
    </location>
</feature>
<feature type="active site" description="Proton donor" evidence="1">
    <location>
        <position position="117"/>
    </location>
</feature>
<feature type="binding site" evidence="1">
    <location>
        <begin position="22"/>
        <end position="23"/>
    </location>
    <ligand>
        <name>phosphoenolpyruvate</name>
        <dbReference type="ChEBI" id="CHEBI:58702"/>
    </ligand>
</feature>
<feature type="binding site" evidence="1">
    <location>
        <position position="93"/>
    </location>
    <ligand>
        <name>UDP-N-acetyl-alpha-D-glucosamine</name>
        <dbReference type="ChEBI" id="CHEBI:57705"/>
    </ligand>
</feature>
<feature type="binding site" evidence="1">
    <location>
        <position position="307"/>
    </location>
    <ligand>
        <name>UDP-N-acetyl-alpha-D-glucosamine</name>
        <dbReference type="ChEBI" id="CHEBI:57705"/>
    </ligand>
</feature>
<feature type="binding site" evidence="1">
    <location>
        <position position="329"/>
    </location>
    <ligand>
        <name>UDP-N-acetyl-alpha-D-glucosamine</name>
        <dbReference type="ChEBI" id="CHEBI:57705"/>
    </ligand>
</feature>
<feature type="modified residue" description="2-(S-cysteinyl)pyruvic acid O-phosphothioketal" evidence="1">
    <location>
        <position position="117"/>
    </location>
</feature>
<accession>B8CIN2</accession>
<proteinExistence type="inferred from homology"/>
<comment type="function">
    <text evidence="1">Cell wall formation. Adds enolpyruvyl to UDP-N-acetylglucosamine.</text>
</comment>
<comment type="catalytic activity">
    <reaction evidence="1">
        <text>phosphoenolpyruvate + UDP-N-acetyl-alpha-D-glucosamine = UDP-N-acetyl-3-O-(1-carboxyvinyl)-alpha-D-glucosamine + phosphate</text>
        <dbReference type="Rhea" id="RHEA:18681"/>
        <dbReference type="ChEBI" id="CHEBI:43474"/>
        <dbReference type="ChEBI" id="CHEBI:57705"/>
        <dbReference type="ChEBI" id="CHEBI:58702"/>
        <dbReference type="ChEBI" id="CHEBI:68483"/>
        <dbReference type="EC" id="2.5.1.7"/>
    </reaction>
</comment>
<comment type="pathway">
    <text evidence="1">Cell wall biogenesis; peptidoglycan biosynthesis.</text>
</comment>
<comment type="subcellular location">
    <subcellularLocation>
        <location evidence="1">Cytoplasm</location>
    </subcellularLocation>
</comment>
<comment type="similarity">
    <text evidence="1">Belongs to the EPSP synthase family. MurA subfamily.</text>
</comment>